<dbReference type="EMBL" id="CP000453">
    <property type="protein sequence ID" value="ABI56199.1"/>
    <property type="molecule type" value="Genomic_DNA"/>
</dbReference>
<dbReference type="RefSeq" id="WP_011628594.1">
    <property type="nucleotide sequence ID" value="NC_008340.1"/>
</dbReference>
<dbReference type="SMR" id="Q0AAD8"/>
<dbReference type="KEGG" id="aeh:Mlg_0845"/>
<dbReference type="eggNOG" id="COG0261">
    <property type="taxonomic scope" value="Bacteria"/>
</dbReference>
<dbReference type="HOGENOM" id="CLU_061463_3_2_6"/>
<dbReference type="OrthoDB" id="9813334at2"/>
<dbReference type="Proteomes" id="UP000001962">
    <property type="component" value="Chromosome"/>
</dbReference>
<dbReference type="GO" id="GO:0005737">
    <property type="term" value="C:cytoplasm"/>
    <property type="evidence" value="ECO:0007669"/>
    <property type="project" value="UniProtKB-ARBA"/>
</dbReference>
<dbReference type="GO" id="GO:1990904">
    <property type="term" value="C:ribonucleoprotein complex"/>
    <property type="evidence" value="ECO:0007669"/>
    <property type="project" value="UniProtKB-KW"/>
</dbReference>
<dbReference type="GO" id="GO:0005840">
    <property type="term" value="C:ribosome"/>
    <property type="evidence" value="ECO:0007669"/>
    <property type="project" value="UniProtKB-KW"/>
</dbReference>
<dbReference type="GO" id="GO:0019843">
    <property type="term" value="F:rRNA binding"/>
    <property type="evidence" value="ECO:0007669"/>
    <property type="project" value="UniProtKB-UniRule"/>
</dbReference>
<dbReference type="GO" id="GO:0003735">
    <property type="term" value="F:structural constituent of ribosome"/>
    <property type="evidence" value="ECO:0007669"/>
    <property type="project" value="InterPro"/>
</dbReference>
<dbReference type="GO" id="GO:0006412">
    <property type="term" value="P:translation"/>
    <property type="evidence" value="ECO:0007669"/>
    <property type="project" value="UniProtKB-UniRule"/>
</dbReference>
<dbReference type="HAMAP" id="MF_01363">
    <property type="entry name" value="Ribosomal_bL21"/>
    <property type="match status" value="1"/>
</dbReference>
<dbReference type="InterPro" id="IPR028909">
    <property type="entry name" value="bL21-like"/>
</dbReference>
<dbReference type="InterPro" id="IPR036164">
    <property type="entry name" value="bL21-like_sf"/>
</dbReference>
<dbReference type="InterPro" id="IPR001787">
    <property type="entry name" value="Ribosomal_bL21"/>
</dbReference>
<dbReference type="InterPro" id="IPR018258">
    <property type="entry name" value="Ribosomal_bL21_CS"/>
</dbReference>
<dbReference type="NCBIfam" id="TIGR00061">
    <property type="entry name" value="L21"/>
    <property type="match status" value="1"/>
</dbReference>
<dbReference type="PANTHER" id="PTHR21349">
    <property type="entry name" value="50S RIBOSOMAL PROTEIN L21"/>
    <property type="match status" value="1"/>
</dbReference>
<dbReference type="PANTHER" id="PTHR21349:SF0">
    <property type="entry name" value="LARGE RIBOSOMAL SUBUNIT PROTEIN BL21M"/>
    <property type="match status" value="1"/>
</dbReference>
<dbReference type="Pfam" id="PF00829">
    <property type="entry name" value="Ribosomal_L21p"/>
    <property type="match status" value="1"/>
</dbReference>
<dbReference type="SUPFAM" id="SSF141091">
    <property type="entry name" value="L21p-like"/>
    <property type="match status" value="1"/>
</dbReference>
<dbReference type="PROSITE" id="PS01169">
    <property type="entry name" value="RIBOSOMAL_L21"/>
    <property type="match status" value="1"/>
</dbReference>
<sequence length="104" mass="11341">MYAVIKTGGKQYKVSEGDVLRVEKLAGEAGASVEFDQVLMVGEGDDVKVGAPTVEGGKVTAEVLGQGRARKIEIQKFKRRKQYRRFAGHRQQFTEVKITGISAG</sequence>
<gene>
    <name evidence="1" type="primary">rplU</name>
    <name type="ordered locus">Mlg_0845</name>
</gene>
<accession>Q0AAD8</accession>
<name>RL21_ALKEH</name>
<proteinExistence type="inferred from homology"/>
<comment type="function">
    <text evidence="1">This protein binds to 23S rRNA in the presence of protein L20.</text>
</comment>
<comment type="subunit">
    <text evidence="1">Part of the 50S ribosomal subunit. Contacts protein L20.</text>
</comment>
<comment type="similarity">
    <text evidence="1">Belongs to the bacterial ribosomal protein bL21 family.</text>
</comment>
<feature type="chain" id="PRO_0000269270" description="Large ribosomal subunit protein bL21">
    <location>
        <begin position="1"/>
        <end position="104"/>
    </location>
</feature>
<reference key="1">
    <citation type="submission" date="2006-08" db="EMBL/GenBank/DDBJ databases">
        <title>Complete sequence of Alkalilimnicola ehrilichei MLHE-1.</title>
        <authorList>
            <person name="Copeland A."/>
            <person name="Lucas S."/>
            <person name="Lapidus A."/>
            <person name="Barry K."/>
            <person name="Detter J.C."/>
            <person name="Glavina del Rio T."/>
            <person name="Hammon N."/>
            <person name="Israni S."/>
            <person name="Dalin E."/>
            <person name="Tice H."/>
            <person name="Pitluck S."/>
            <person name="Sims D."/>
            <person name="Brettin T."/>
            <person name="Bruce D."/>
            <person name="Han C."/>
            <person name="Tapia R."/>
            <person name="Gilna P."/>
            <person name="Schmutz J."/>
            <person name="Larimer F."/>
            <person name="Land M."/>
            <person name="Hauser L."/>
            <person name="Kyrpides N."/>
            <person name="Mikhailova N."/>
            <person name="Oremland R.S."/>
            <person name="Hoeft S.E."/>
            <person name="Switzer-Blum J."/>
            <person name="Kulp T."/>
            <person name="King G."/>
            <person name="Tabita R."/>
            <person name="Witte B."/>
            <person name="Santini J.M."/>
            <person name="Basu P."/>
            <person name="Hollibaugh J.T."/>
            <person name="Xie G."/>
            <person name="Stolz J.F."/>
            <person name="Richardson P."/>
        </authorList>
    </citation>
    <scope>NUCLEOTIDE SEQUENCE [LARGE SCALE GENOMIC DNA]</scope>
    <source>
        <strain>ATCC BAA-1101 / DSM 17681 / MLHE-1</strain>
    </source>
</reference>
<keyword id="KW-1185">Reference proteome</keyword>
<keyword id="KW-0687">Ribonucleoprotein</keyword>
<keyword id="KW-0689">Ribosomal protein</keyword>
<keyword id="KW-0694">RNA-binding</keyword>
<keyword id="KW-0699">rRNA-binding</keyword>
<protein>
    <recommendedName>
        <fullName evidence="1">Large ribosomal subunit protein bL21</fullName>
    </recommendedName>
    <alternativeName>
        <fullName evidence="2">50S ribosomal protein L21</fullName>
    </alternativeName>
</protein>
<organism>
    <name type="scientific">Alkalilimnicola ehrlichii (strain ATCC BAA-1101 / DSM 17681 / MLHE-1)</name>
    <dbReference type="NCBI Taxonomy" id="187272"/>
    <lineage>
        <taxon>Bacteria</taxon>
        <taxon>Pseudomonadati</taxon>
        <taxon>Pseudomonadota</taxon>
        <taxon>Gammaproteobacteria</taxon>
        <taxon>Chromatiales</taxon>
        <taxon>Ectothiorhodospiraceae</taxon>
        <taxon>Alkalilimnicola</taxon>
    </lineage>
</organism>
<evidence type="ECO:0000255" key="1">
    <source>
        <dbReference type="HAMAP-Rule" id="MF_01363"/>
    </source>
</evidence>
<evidence type="ECO:0000305" key="2"/>